<gene>
    <name evidence="5" type="primary">XEG1</name>
    <name type="ORF">PPTG_19377</name>
</gene>
<sequence length="241" mass="25537">MKGLLAGTIAAATFAVASAGEYCGQWDWAKSTQYTVYNNLWNKNAAASGSQCTGVDKISGSTIGWHTSYTWTGGAATEVKSYSNAALIFSPKQIKNIKTIPTKMKYSYSHSSGTFVADVSYDLFTSSTATGKNEYEIMIWLAAYGGAGPISSTGKAIATVTIGSNSFKLYKGPNGSTTVFSFVATKTITNFTADLQKFLTYLVNSQGLPSSQYLITLEAGTEPFVGTNAKMTVSSYSAAVN</sequence>
<comment type="function">
    <text evidence="1 4">Glycoside hydrolase that exhibits xyloglucanase activity (By similarity). Acts as an important virulence factor during P.parasitica infection of its host Nicotiana benthamiana (PubMed:28082413). Also acts as a pathogen-associated molecular pattern (PAMP) in host species, where it can trigger defense responses including cell death. The PAMP activity is independent of its xyloglucanase activity (By similarity). With paralog XLP1, is required to elevate apoplastic sugar during P.parasitica infection (PubMed:28082413).</text>
</comment>
<comment type="catalytic activity">
    <reaction evidence="7">
        <text>xyloglucan + H2O = xyloglucan oligosaccharides.</text>
        <dbReference type="EC" id="3.2.1.151"/>
    </reaction>
</comment>
<comment type="activity regulation">
    <text evidence="4">The xyloglucanase activity is inhibited by the binding of the host apoplastic glucanase inhibitor GIP2.</text>
</comment>
<comment type="subunit">
    <text evidence="4">Interacts with host apoplastic glucanase inhibitor GIP2.</text>
</comment>
<comment type="similarity">
    <text evidence="6">Belongs to the glycosyl hydrolase 12 (cellulase H) family.</text>
</comment>
<protein>
    <recommendedName>
        <fullName evidence="5">Xyloglucan-specific endo-beta-1,4-glucanase 1</fullName>
        <ecNumber evidence="7">3.2.1.151</ecNumber>
    </recommendedName>
    <alternativeName>
        <fullName evidence="5">Glycoside hydrolase family 12 protein XEG1</fullName>
        <shortName evidence="5">GH12 protein XEG1</shortName>
    </alternativeName>
</protein>
<accession>W2PEP3</accession>
<dbReference type="EC" id="3.2.1.151" evidence="7"/>
<dbReference type="EMBL" id="KI669674">
    <property type="protein sequence ID" value="ETM98683.1"/>
    <property type="molecule type" value="Genomic_DNA"/>
</dbReference>
<dbReference type="RefSeq" id="XP_008916024.1">
    <property type="nucleotide sequence ID" value="XM_008917776.1"/>
</dbReference>
<dbReference type="SMR" id="W2PEP3"/>
<dbReference type="STRING" id="761204.W2PEP3"/>
<dbReference type="GlyCosmos" id="W2PEP3">
    <property type="glycosylation" value="2 sites, No reported glycans"/>
</dbReference>
<dbReference type="EnsemblProtists" id="ETM98683">
    <property type="protein sequence ID" value="ETM98683"/>
    <property type="gene ID" value="PPTG_19377"/>
</dbReference>
<dbReference type="GeneID" id="20188152"/>
<dbReference type="VEuPathDB" id="FungiDB:PPTG_19377"/>
<dbReference type="OMA" id="NLWGQAQ"/>
<dbReference type="OrthoDB" id="19526at4783"/>
<dbReference type="Proteomes" id="UP000018817">
    <property type="component" value="Unassembled WGS sequence"/>
</dbReference>
<dbReference type="GO" id="GO:0008810">
    <property type="term" value="F:cellulase activity"/>
    <property type="evidence" value="ECO:0007669"/>
    <property type="project" value="InterPro"/>
</dbReference>
<dbReference type="GO" id="GO:0033946">
    <property type="term" value="F:xyloglucan-specific endo-beta-1,4-glucanase activity"/>
    <property type="evidence" value="ECO:0007669"/>
    <property type="project" value="UniProtKB-EC"/>
</dbReference>
<dbReference type="GO" id="GO:0000272">
    <property type="term" value="P:polysaccharide catabolic process"/>
    <property type="evidence" value="ECO:0007669"/>
    <property type="project" value="UniProtKB-KW"/>
</dbReference>
<dbReference type="Gene3D" id="2.60.120.180">
    <property type="match status" value="1"/>
</dbReference>
<dbReference type="InterPro" id="IPR013320">
    <property type="entry name" value="ConA-like_dom_sf"/>
</dbReference>
<dbReference type="InterPro" id="IPR013319">
    <property type="entry name" value="GH11/12"/>
</dbReference>
<dbReference type="InterPro" id="IPR002594">
    <property type="entry name" value="GH12"/>
</dbReference>
<dbReference type="PANTHER" id="PTHR34002">
    <property type="entry name" value="BLR1656 PROTEIN"/>
    <property type="match status" value="1"/>
</dbReference>
<dbReference type="PANTHER" id="PTHR34002:SF9">
    <property type="entry name" value="XYLOGLUCAN-SPECIFIC ENDO-BETA-1,4-GLUCANASE A"/>
    <property type="match status" value="1"/>
</dbReference>
<dbReference type="Pfam" id="PF01670">
    <property type="entry name" value="Glyco_hydro_12"/>
    <property type="match status" value="1"/>
</dbReference>
<dbReference type="SUPFAM" id="SSF49899">
    <property type="entry name" value="Concanavalin A-like lectins/glucanases"/>
    <property type="match status" value="1"/>
</dbReference>
<feature type="signal peptide" evidence="2">
    <location>
        <begin position="1"/>
        <end position="19"/>
    </location>
</feature>
<feature type="chain" id="PRO_5004821512" description="Xyloglucan-specific endo-beta-1,4-glucanase 1">
    <location>
        <begin position="20"/>
        <end position="241"/>
    </location>
</feature>
<feature type="active site" evidence="1">
    <location>
        <position position="136"/>
    </location>
</feature>
<feature type="active site" evidence="1">
    <location>
        <position position="222"/>
    </location>
</feature>
<feature type="glycosylation site" description="N-linked (GlcNAc...) asparagine" evidence="3">
    <location>
        <position position="174"/>
    </location>
</feature>
<feature type="glycosylation site" description="N-linked (GlcNAc...) asparagine" evidence="3">
    <location>
        <position position="190"/>
    </location>
</feature>
<feature type="mutagenesis site" description="Impairs elevated levels of reducing sugars in the host apoplast; when associated wit D-222." evidence="4">
    <original>E</original>
    <variation>D</variation>
    <location>
        <position position="136"/>
    </location>
</feature>
<feature type="mutagenesis site" description="Impairs elevated levels of reducing sugars in the host apoplast; when associated wit D-136." evidence="4">
    <original>E</original>
    <variation>D</variation>
    <location>
        <position position="222"/>
    </location>
</feature>
<evidence type="ECO:0000250" key="1">
    <source>
        <dbReference type="UniProtKB" id="G4ZHR2"/>
    </source>
</evidence>
<evidence type="ECO:0000255" key="2"/>
<evidence type="ECO:0000255" key="3">
    <source>
        <dbReference type="PROSITE-ProRule" id="PRU00498"/>
    </source>
</evidence>
<evidence type="ECO:0000269" key="4">
    <source>
    </source>
</evidence>
<evidence type="ECO:0000303" key="5">
    <source>
    </source>
</evidence>
<evidence type="ECO:0000305" key="6"/>
<evidence type="ECO:0000305" key="7">
    <source>
    </source>
</evidence>
<keyword id="KW-0119">Carbohydrate metabolism</keyword>
<keyword id="KW-0325">Glycoprotein</keyword>
<keyword id="KW-0326">Glycosidase</keyword>
<keyword id="KW-0378">Hydrolase</keyword>
<keyword id="KW-0624">Polysaccharide degradation</keyword>
<keyword id="KW-1185">Reference proteome</keyword>
<keyword id="KW-0732">Signal</keyword>
<keyword id="KW-0843">Virulence</keyword>
<proteinExistence type="evidence at protein level"/>
<reference key="1">
    <citation type="submission" date="2011-12" db="EMBL/GenBank/DDBJ databases">
        <authorList>
            <consortium name="The Broad Institute Genome Sequencing Platform"/>
            <person name="Russ C."/>
            <person name="Tyler B."/>
            <person name="Panabieres F."/>
            <person name="Shan W."/>
            <person name="Tripathy S."/>
            <person name="Grunwald N."/>
            <person name="Machado M."/>
            <person name="Young S.K."/>
            <person name="Zeng Q."/>
            <person name="Gargeya S."/>
            <person name="Fitzgerald M."/>
            <person name="Haas B."/>
            <person name="Abouelleil A."/>
            <person name="Alvarado L."/>
            <person name="Arachchi H.M."/>
            <person name="Berlin A."/>
            <person name="Chapman S.B."/>
            <person name="Gearin G."/>
            <person name="Goldberg J."/>
            <person name="Griggs A."/>
            <person name="Gujja S."/>
            <person name="Hansen M."/>
            <person name="Heiman D."/>
            <person name="Howarth C."/>
            <person name="Larimer J."/>
            <person name="Lui A."/>
            <person name="MacDonald P.J.P."/>
            <person name="McCowen C."/>
            <person name="Montmayeur A."/>
            <person name="Murphy C."/>
            <person name="Neiman D."/>
            <person name="Pearson M."/>
            <person name="Priest M."/>
            <person name="Roberts A."/>
            <person name="Saif S."/>
            <person name="Shea T."/>
            <person name="Sisk P."/>
            <person name="Stolte C."/>
            <person name="Sykes S."/>
            <person name="Wortman J."/>
            <person name="Nusbaum C."/>
            <person name="Birren B."/>
        </authorList>
    </citation>
    <scope>NUCLEOTIDE SEQUENCE [LARGE SCALE GENOMIC DNA]</scope>
    <source>
        <strain>INRA-310</strain>
    </source>
</reference>
<reference key="2">
    <citation type="submission" date="2013-11" db="EMBL/GenBank/DDBJ databases">
        <title>The Genome Sequence of Phytophthora parasitica INRA-310.</title>
        <authorList>
            <consortium name="The Broad Institute Genomics Platform"/>
            <person name="Russ C."/>
            <person name="Tyler B."/>
            <person name="Panabieres F."/>
            <person name="Shan W."/>
            <person name="Tripathy S."/>
            <person name="Grunwald N."/>
            <person name="Machado M."/>
            <person name="Johnson C.S."/>
            <person name="Arredondo F."/>
            <person name="Hong C."/>
            <person name="Coffey M."/>
            <person name="Young S.K."/>
            <person name="Zeng Q."/>
            <person name="Gargeya S."/>
            <person name="Fitzgerald M."/>
            <person name="Abouelleil A."/>
            <person name="Alvarado L."/>
            <person name="Chapman S.B."/>
            <person name="Gainer-Dewar J."/>
            <person name="Goldberg J."/>
            <person name="Griggs A."/>
            <person name="Gujja S."/>
            <person name="Hansen M."/>
            <person name="Howarth C."/>
            <person name="Imamovic A."/>
            <person name="Ireland A."/>
            <person name="Larimer J."/>
            <person name="McCowan C."/>
            <person name="Murphy C."/>
            <person name="Pearson M."/>
            <person name="Poon T.W."/>
            <person name="Priest M."/>
            <person name="Roberts A."/>
            <person name="Saif S."/>
            <person name="Shea T."/>
            <person name="Sykes S."/>
            <person name="Wortman J."/>
            <person name="Nusbaum C."/>
            <person name="Birren B."/>
        </authorList>
    </citation>
    <scope>NUCLEOTIDE SEQUENCE [LARGE SCALE GENOMIC DNA]</scope>
    <source>
        <strain>INRA-310</strain>
    </source>
</reference>
<reference key="3">
    <citation type="journal article" date="2017" name="Science">
        <title>A paralogous decoy protects Phytophthora sojae apoplastic effector PsXEG1 from a host inhibitor.</title>
        <authorList>
            <person name="Ma Z."/>
            <person name="Zhu L."/>
            <person name="Song T."/>
            <person name="Wang Y."/>
            <person name="Zhang Q."/>
            <person name="Xia Y."/>
            <person name="Qiu M."/>
            <person name="Lin Y."/>
            <person name="Li H."/>
            <person name="Kong L."/>
            <person name="Fang Y."/>
            <person name="Ye W."/>
            <person name="Wang Y."/>
            <person name="Dong S."/>
            <person name="Zheng X."/>
            <person name="Tyler B.M."/>
            <person name="Wang Y."/>
        </authorList>
    </citation>
    <scope>FUNCTION</scope>
    <scope>SUBCELLULAR LOCATION</scope>
    <scope>INTERACTION WITH HOST GIP2</scope>
    <scope>MUTAGENESIS OF GLU-136 AND GLU-222</scope>
    <scope>CATALYTIC ACTIVITY</scope>
    <scope>ACTIVITY REGULATION</scope>
</reference>
<name>XEG1_PHYN3</name>
<organism>
    <name type="scientific">Phytophthora nicotianae (strain INRA-310)</name>
    <name type="common">Phytophthora parasitica</name>
    <dbReference type="NCBI Taxonomy" id="761204"/>
    <lineage>
        <taxon>Eukaryota</taxon>
        <taxon>Sar</taxon>
        <taxon>Stramenopiles</taxon>
        <taxon>Oomycota</taxon>
        <taxon>Peronosporales</taxon>
        <taxon>Peronosporaceae</taxon>
        <taxon>Phytophthora</taxon>
    </lineage>
</organism>